<protein>
    <recommendedName>
        <fullName evidence="1">Serine/threonine transporter SstT</fullName>
    </recommendedName>
    <alternativeName>
        <fullName evidence="1">Na(+)/serine-threonine symporter</fullName>
    </alternativeName>
</protein>
<organism>
    <name type="scientific">Shewanella sp. (strain MR-4)</name>
    <dbReference type="NCBI Taxonomy" id="60480"/>
    <lineage>
        <taxon>Bacteria</taxon>
        <taxon>Pseudomonadati</taxon>
        <taxon>Pseudomonadota</taxon>
        <taxon>Gammaproteobacteria</taxon>
        <taxon>Alteromonadales</taxon>
        <taxon>Shewanellaceae</taxon>
        <taxon>Shewanella</taxon>
    </lineage>
</organism>
<feature type="chain" id="PRO_0000309126" description="Serine/threonine transporter SstT">
    <location>
        <begin position="1"/>
        <end position="408"/>
    </location>
</feature>
<feature type="transmembrane region" description="Helical" evidence="1">
    <location>
        <begin position="11"/>
        <end position="31"/>
    </location>
</feature>
<feature type="transmembrane region" description="Helical" evidence="1">
    <location>
        <begin position="43"/>
        <end position="63"/>
    </location>
</feature>
<feature type="transmembrane region" description="Helical" evidence="1">
    <location>
        <begin position="82"/>
        <end position="102"/>
    </location>
</feature>
<feature type="transmembrane region" description="Helical" evidence="1">
    <location>
        <begin position="141"/>
        <end position="161"/>
    </location>
</feature>
<feature type="transmembrane region" description="Helical" evidence="1">
    <location>
        <begin position="192"/>
        <end position="212"/>
    </location>
</feature>
<feature type="transmembrane region" description="Helical" evidence="1">
    <location>
        <begin position="216"/>
        <end position="236"/>
    </location>
</feature>
<feature type="transmembrane region" description="Helical" evidence="1">
    <location>
        <begin position="290"/>
        <end position="310"/>
    </location>
</feature>
<feature type="transmembrane region" description="Helical" evidence="1">
    <location>
        <begin position="316"/>
        <end position="336"/>
    </location>
</feature>
<feature type="transmembrane region" description="Helical" evidence="1">
    <location>
        <begin position="363"/>
        <end position="383"/>
    </location>
</feature>
<gene>
    <name evidence="1" type="primary">sstT</name>
    <name type="ordered locus">Shewmr4_1373</name>
</gene>
<reference key="1">
    <citation type="submission" date="2006-08" db="EMBL/GenBank/DDBJ databases">
        <title>Complete sequence of Shewanella sp. MR-4.</title>
        <authorList>
            <consortium name="US DOE Joint Genome Institute"/>
            <person name="Copeland A."/>
            <person name="Lucas S."/>
            <person name="Lapidus A."/>
            <person name="Barry K."/>
            <person name="Detter J.C."/>
            <person name="Glavina del Rio T."/>
            <person name="Hammon N."/>
            <person name="Israni S."/>
            <person name="Dalin E."/>
            <person name="Tice H."/>
            <person name="Pitluck S."/>
            <person name="Kiss H."/>
            <person name="Brettin T."/>
            <person name="Bruce D."/>
            <person name="Han C."/>
            <person name="Tapia R."/>
            <person name="Gilna P."/>
            <person name="Schmutz J."/>
            <person name="Larimer F."/>
            <person name="Land M."/>
            <person name="Hauser L."/>
            <person name="Kyrpides N."/>
            <person name="Mikhailova N."/>
            <person name="Nealson K."/>
            <person name="Konstantinidis K."/>
            <person name="Klappenbach J."/>
            <person name="Tiedje J."/>
            <person name="Richardson P."/>
        </authorList>
    </citation>
    <scope>NUCLEOTIDE SEQUENCE [LARGE SCALE GENOMIC DNA]</scope>
    <source>
        <strain>MR-4</strain>
    </source>
</reference>
<proteinExistence type="inferred from homology"/>
<dbReference type="EMBL" id="CP000446">
    <property type="protein sequence ID" value="ABI38451.1"/>
    <property type="molecule type" value="Genomic_DNA"/>
</dbReference>
<dbReference type="RefSeq" id="WP_011622156.1">
    <property type="nucleotide sequence ID" value="NC_008321.1"/>
</dbReference>
<dbReference type="SMR" id="Q0HKG6"/>
<dbReference type="KEGG" id="she:Shewmr4_1373"/>
<dbReference type="HOGENOM" id="CLU_044581_0_0_6"/>
<dbReference type="GO" id="GO:0005886">
    <property type="term" value="C:plasma membrane"/>
    <property type="evidence" value="ECO:0007669"/>
    <property type="project" value="UniProtKB-SubCell"/>
</dbReference>
<dbReference type="GO" id="GO:0005295">
    <property type="term" value="F:neutral L-amino acid:sodium symporter activity"/>
    <property type="evidence" value="ECO:0007669"/>
    <property type="project" value="TreeGrafter"/>
</dbReference>
<dbReference type="GO" id="GO:0032329">
    <property type="term" value="P:serine transport"/>
    <property type="evidence" value="ECO:0007669"/>
    <property type="project" value="InterPro"/>
</dbReference>
<dbReference type="GO" id="GO:0015826">
    <property type="term" value="P:threonine transport"/>
    <property type="evidence" value="ECO:0007669"/>
    <property type="project" value="InterPro"/>
</dbReference>
<dbReference type="FunFam" id="1.10.3860.10:FF:000003">
    <property type="entry name" value="Serine/threonine transporter sstT"/>
    <property type="match status" value="1"/>
</dbReference>
<dbReference type="Gene3D" id="1.10.3860.10">
    <property type="entry name" value="Sodium:dicarboxylate symporter"/>
    <property type="match status" value="1"/>
</dbReference>
<dbReference type="HAMAP" id="MF_01582">
    <property type="entry name" value="Ser_Thr_transp_SstT"/>
    <property type="match status" value="1"/>
</dbReference>
<dbReference type="InterPro" id="IPR001991">
    <property type="entry name" value="Na-dicarboxylate_symporter"/>
</dbReference>
<dbReference type="InterPro" id="IPR036458">
    <property type="entry name" value="Na:dicarbo_symporter_sf"/>
</dbReference>
<dbReference type="InterPro" id="IPR023025">
    <property type="entry name" value="Ser_Thr_transp_SstT"/>
</dbReference>
<dbReference type="NCBIfam" id="NF010151">
    <property type="entry name" value="PRK13628.1"/>
    <property type="match status" value="1"/>
</dbReference>
<dbReference type="PANTHER" id="PTHR42865">
    <property type="entry name" value="PROTON/GLUTAMATE-ASPARTATE SYMPORTER"/>
    <property type="match status" value="1"/>
</dbReference>
<dbReference type="PANTHER" id="PTHR42865:SF8">
    <property type="entry name" value="SERINE_THREONINE TRANSPORTER SSTT"/>
    <property type="match status" value="1"/>
</dbReference>
<dbReference type="Pfam" id="PF00375">
    <property type="entry name" value="SDF"/>
    <property type="match status" value="1"/>
</dbReference>
<dbReference type="PRINTS" id="PR00173">
    <property type="entry name" value="EDTRNSPORT"/>
</dbReference>
<dbReference type="SUPFAM" id="SSF118215">
    <property type="entry name" value="Proton glutamate symport protein"/>
    <property type="match status" value="1"/>
</dbReference>
<accession>Q0HKG6</accession>
<name>SSTT_SHESM</name>
<comment type="function">
    <text evidence="1">Involved in the import of serine and threonine into the cell, with the concomitant import of sodium (symport system).</text>
</comment>
<comment type="catalytic activity">
    <reaction evidence="1">
        <text>L-serine(in) + Na(+)(in) = L-serine(out) + Na(+)(out)</text>
        <dbReference type="Rhea" id="RHEA:29575"/>
        <dbReference type="ChEBI" id="CHEBI:29101"/>
        <dbReference type="ChEBI" id="CHEBI:33384"/>
    </reaction>
    <physiologicalReaction direction="right-to-left" evidence="1">
        <dbReference type="Rhea" id="RHEA:29577"/>
    </physiologicalReaction>
</comment>
<comment type="catalytic activity">
    <reaction evidence="1">
        <text>L-threonine(in) + Na(+)(in) = L-threonine(out) + Na(+)(out)</text>
        <dbReference type="Rhea" id="RHEA:69999"/>
        <dbReference type="ChEBI" id="CHEBI:29101"/>
        <dbReference type="ChEBI" id="CHEBI:57926"/>
    </reaction>
    <physiologicalReaction direction="right-to-left" evidence="1">
        <dbReference type="Rhea" id="RHEA:70001"/>
    </physiologicalReaction>
</comment>
<comment type="subcellular location">
    <subcellularLocation>
        <location evidence="1">Cell inner membrane</location>
        <topology evidence="1">Multi-pass membrane protein</topology>
    </subcellularLocation>
</comment>
<comment type="similarity">
    <text evidence="1">Belongs to the dicarboxylate/amino acid:cation symporter (DAACS) (TC 2.A.23) family.</text>
</comment>
<evidence type="ECO:0000255" key="1">
    <source>
        <dbReference type="HAMAP-Rule" id="MF_01582"/>
    </source>
</evidence>
<keyword id="KW-0029">Amino-acid transport</keyword>
<keyword id="KW-0997">Cell inner membrane</keyword>
<keyword id="KW-1003">Cell membrane</keyword>
<keyword id="KW-0472">Membrane</keyword>
<keyword id="KW-0769">Symport</keyword>
<keyword id="KW-0812">Transmembrane</keyword>
<keyword id="KW-1133">Transmembrane helix</keyword>
<keyword id="KW-0813">Transport</keyword>
<sequence length="408" mass="42085">MKQESSFLAKLANGSLVLQILVGIIAGVSLASFSHEAAKQVAFLGSLFVGALKAIAPILVFILVASSIANQKKNTQTNMRPIVVLYLFGTFAAALTAVLLSMMFPTNLVLVAGVEGTSPPQGIGEVLNTLLFKLVDNPVNALMTGNYIGILAWGVGLGLALHHASDSTKQVFADVSHGISQMVRFIIRLAPIGIFGLVAATFAETGFAAIAGYAKLLAVLLGAMAIIALIVNPLIVYVKIKRNPYPLVIRCLRESGVTAFFTRSSAANIPVNMALCEKLKLHEDTYSVSIPLGATINMGGAAITITVLTLAAAHTLGIQVDLLTALLLSVVAAISACGASGVAGGSLLLIPLACSLFGISNDVAMQVVAVGFIIGVIQDAAETALNSSTDVIFTAAACEAAENKAKLG</sequence>